<comment type="function">
    <text>Probably part of an ABC transporter complex.</text>
</comment>
<comment type="subunit">
    <text evidence="2">The complex is composed of two ATP-binding proteins (BRA0745), two transmembrane proteins (BRA0749) and a solute-binding protein (BRA0748).</text>
</comment>
<comment type="subcellular location">
    <subcellularLocation>
        <location evidence="2">Periplasm</location>
    </subcellularLocation>
</comment>
<comment type="similarity">
    <text evidence="2">Belongs to the bacterial solute-binding protein 1 family.</text>
</comment>
<dbReference type="EMBL" id="AE014292">
    <property type="protein sequence ID" value="AAN33930.1"/>
    <property type="molecule type" value="Genomic_DNA"/>
</dbReference>
<dbReference type="EMBL" id="CP002998">
    <property type="protein sequence ID" value="AEM20206.1"/>
    <property type="molecule type" value="Genomic_DNA"/>
</dbReference>
<dbReference type="RefSeq" id="WP_002965896.1">
    <property type="nucleotide sequence ID" value="NZ_KN046805.1"/>
</dbReference>
<dbReference type="SMR" id="Q8FVS7"/>
<dbReference type="KEGG" id="bms:BRA0748"/>
<dbReference type="KEGG" id="bsi:BS1330_II0741"/>
<dbReference type="PATRIC" id="fig|204722.21.peg.1334"/>
<dbReference type="HOGENOM" id="CLU_031285_10_1_5"/>
<dbReference type="PhylomeDB" id="Q8FVS7"/>
<dbReference type="Proteomes" id="UP000007104">
    <property type="component" value="Chromosome II"/>
</dbReference>
<dbReference type="GO" id="GO:0055052">
    <property type="term" value="C:ATP-binding cassette (ABC) transporter complex, substrate-binding subunit-containing"/>
    <property type="evidence" value="ECO:0007669"/>
    <property type="project" value="TreeGrafter"/>
</dbReference>
<dbReference type="GO" id="GO:0042597">
    <property type="term" value="C:periplasmic space"/>
    <property type="evidence" value="ECO:0007669"/>
    <property type="project" value="UniProtKB-SubCell"/>
</dbReference>
<dbReference type="GO" id="GO:1901982">
    <property type="term" value="F:maltose binding"/>
    <property type="evidence" value="ECO:0007669"/>
    <property type="project" value="TreeGrafter"/>
</dbReference>
<dbReference type="GO" id="GO:0042956">
    <property type="term" value="P:maltodextrin transmembrane transport"/>
    <property type="evidence" value="ECO:0007669"/>
    <property type="project" value="TreeGrafter"/>
</dbReference>
<dbReference type="GO" id="GO:0015768">
    <property type="term" value="P:maltose transport"/>
    <property type="evidence" value="ECO:0007669"/>
    <property type="project" value="TreeGrafter"/>
</dbReference>
<dbReference type="GO" id="GO:0055085">
    <property type="term" value="P:transmembrane transport"/>
    <property type="evidence" value="ECO:0007669"/>
    <property type="project" value="InterPro"/>
</dbReference>
<dbReference type="CDD" id="cd13585">
    <property type="entry name" value="PBP2_TMBP_like"/>
    <property type="match status" value="1"/>
</dbReference>
<dbReference type="Gene3D" id="3.40.190.10">
    <property type="entry name" value="Periplasmic binding protein-like II"/>
    <property type="match status" value="2"/>
</dbReference>
<dbReference type="InterPro" id="IPR006059">
    <property type="entry name" value="SBP"/>
</dbReference>
<dbReference type="InterPro" id="IPR006061">
    <property type="entry name" value="SBP_1_CS"/>
</dbReference>
<dbReference type="PANTHER" id="PTHR30061">
    <property type="entry name" value="MALTOSE-BINDING PERIPLASMIC PROTEIN"/>
    <property type="match status" value="1"/>
</dbReference>
<dbReference type="PANTHER" id="PTHR30061:SF50">
    <property type="entry name" value="MALTOSE_MALTODEXTRIN-BINDING PERIPLASMIC PROTEIN"/>
    <property type="match status" value="1"/>
</dbReference>
<dbReference type="Pfam" id="PF01547">
    <property type="entry name" value="SBP_bac_1"/>
    <property type="match status" value="1"/>
</dbReference>
<dbReference type="SUPFAM" id="SSF53850">
    <property type="entry name" value="Periplasmic binding protein-like II"/>
    <property type="match status" value="1"/>
</dbReference>
<dbReference type="PROSITE" id="PS01037">
    <property type="entry name" value="SBP_BACTERIAL_1"/>
    <property type="match status" value="1"/>
</dbReference>
<gene>
    <name type="ordered locus">BRA0748</name>
    <name type="ordered locus">BS1330_II0741</name>
</gene>
<sequence length="411" mass="45008">MLIRKWKAGLLAGLSILALASSADAGEVRMTVAEYSAKTGPYFEEVKKAFEAENPGITLNFEVVPWDVLLQKLTTDISAGTNADLSIIGTRWLIDFVQQGIAEPLDGYMNDEFKGRFIETFLSPSVLDGKTYGLPIAASARAMYYNKDLFEKAGIKNPPANWDELKADAAKIKALGGENYGFGLQGKEIETDVYYYYAMWSYGTEILNKDGTSGLSTPGALEAAKLYKSMIDDGLTQPGVTSYAREDVQNLFKQGKVGMMITAPFLSNQIKEEAPNLKYGVAAIPAGPTGARGTYGVTDSVIMFQNSKNKEEAWKVLDFLFQKDWRAKFTQNEGFLPVNKEEAKMDYYVNNADLAAFTALLPDARFAPVIPGWEEIADITSNAMQSIYLGKGEPDAVLKDAAAKADAILKK</sequence>
<accession>Q8FVS7</accession>
<accession>G0KDB8</accession>
<proteinExistence type="inferred from homology"/>
<evidence type="ECO:0000255" key="1"/>
<evidence type="ECO:0000305" key="2"/>
<feature type="signal peptide" evidence="1">
    <location>
        <begin position="1"/>
        <end position="25"/>
    </location>
</feature>
<feature type="chain" id="PRO_0000281198" description="Putative binding protein BRA0748/BS1330_II0741">
    <location>
        <begin position="26"/>
        <end position="411"/>
    </location>
</feature>
<keyword id="KW-0574">Periplasm</keyword>
<keyword id="KW-0732">Signal</keyword>
<keyword id="KW-0813">Transport</keyword>
<name>Y3748_BRUSU</name>
<organism>
    <name type="scientific">Brucella suis biovar 1 (strain 1330)</name>
    <dbReference type="NCBI Taxonomy" id="204722"/>
    <lineage>
        <taxon>Bacteria</taxon>
        <taxon>Pseudomonadati</taxon>
        <taxon>Pseudomonadota</taxon>
        <taxon>Alphaproteobacteria</taxon>
        <taxon>Hyphomicrobiales</taxon>
        <taxon>Brucellaceae</taxon>
        <taxon>Brucella/Ochrobactrum group</taxon>
        <taxon>Brucella</taxon>
    </lineage>
</organism>
<reference key="1">
    <citation type="journal article" date="2002" name="Proc. Natl. Acad. Sci. U.S.A.">
        <title>The Brucella suis genome reveals fundamental similarities between animal and plant pathogens and symbionts.</title>
        <authorList>
            <person name="Paulsen I.T."/>
            <person name="Seshadri R."/>
            <person name="Nelson K.E."/>
            <person name="Eisen J.A."/>
            <person name="Heidelberg J.F."/>
            <person name="Read T.D."/>
            <person name="Dodson R.J."/>
            <person name="Umayam L.A."/>
            <person name="Brinkac L.M."/>
            <person name="Beanan M.J."/>
            <person name="Daugherty S.C."/>
            <person name="DeBoy R.T."/>
            <person name="Durkin A.S."/>
            <person name="Kolonay J.F."/>
            <person name="Madupu R."/>
            <person name="Nelson W.C."/>
            <person name="Ayodeji B."/>
            <person name="Kraul M."/>
            <person name="Shetty J."/>
            <person name="Malek J.A."/>
            <person name="Van Aken S.E."/>
            <person name="Riedmuller S."/>
            <person name="Tettelin H."/>
            <person name="Gill S.R."/>
            <person name="White O."/>
            <person name="Salzberg S.L."/>
            <person name="Hoover D.L."/>
            <person name="Lindler L.E."/>
            <person name="Halling S.M."/>
            <person name="Boyle S.M."/>
            <person name="Fraser C.M."/>
        </authorList>
    </citation>
    <scope>NUCLEOTIDE SEQUENCE [LARGE SCALE GENOMIC DNA]</scope>
    <source>
        <strain>1330</strain>
    </source>
</reference>
<reference key="2">
    <citation type="journal article" date="2011" name="J. Bacteriol.">
        <title>Revised genome sequence of Brucella suis 1330.</title>
        <authorList>
            <person name="Tae H."/>
            <person name="Shallom S."/>
            <person name="Settlage R."/>
            <person name="Preston D."/>
            <person name="Adams L.G."/>
            <person name="Garner H.R."/>
        </authorList>
    </citation>
    <scope>NUCLEOTIDE SEQUENCE [LARGE SCALE GENOMIC DNA]</scope>
    <source>
        <strain>1330</strain>
    </source>
</reference>
<protein>
    <recommendedName>
        <fullName>Putative binding protein BRA0748/BS1330_II0741</fullName>
    </recommendedName>
</protein>